<gene>
    <name evidence="1" type="primary">rimM</name>
    <name type="ordered locus">SpyM3_0573</name>
</gene>
<protein>
    <recommendedName>
        <fullName evidence="1">Ribosome maturation factor RimM</fullName>
    </recommendedName>
</protein>
<feature type="chain" id="PRO_0000163368" description="Ribosome maturation factor RimM">
    <location>
        <begin position="1"/>
        <end position="172"/>
    </location>
</feature>
<feature type="domain" description="PRC barrel" evidence="1">
    <location>
        <begin position="96"/>
        <end position="168"/>
    </location>
</feature>
<reference key="1">
    <citation type="journal article" date="2002" name="Proc. Natl. Acad. Sci. U.S.A.">
        <title>Genome sequence of a serotype M3 strain of group A Streptococcus: phage-encoded toxins, the high-virulence phenotype, and clone emergence.</title>
        <authorList>
            <person name="Beres S.B."/>
            <person name="Sylva G.L."/>
            <person name="Barbian K.D."/>
            <person name="Lei B."/>
            <person name="Hoff J.S."/>
            <person name="Mammarella N.D."/>
            <person name="Liu M.-Y."/>
            <person name="Smoot J.C."/>
            <person name="Porcella S.F."/>
            <person name="Parkins L.D."/>
            <person name="Campbell D.S."/>
            <person name="Smith T.M."/>
            <person name="McCormick J.K."/>
            <person name="Leung D.Y.M."/>
            <person name="Schlievert P.M."/>
            <person name="Musser J.M."/>
        </authorList>
    </citation>
    <scope>NUCLEOTIDE SEQUENCE [LARGE SCALE GENOMIC DNA]</scope>
    <source>
        <strain>ATCC BAA-595 / MGAS315</strain>
    </source>
</reference>
<comment type="function">
    <text evidence="1">An accessory protein needed during the final step in the assembly of 30S ribosomal subunit, possibly for assembly of the head region. Essential for efficient processing of 16S rRNA. May be needed both before and after RbfA during the maturation of 16S rRNA. It has affinity for free ribosomal 30S subunits but not for 70S ribosomes.</text>
</comment>
<comment type="subunit">
    <text evidence="1">Binds ribosomal protein uS19.</text>
</comment>
<comment type="subcellular location">
    <subcellularLocation>
        <location evidence="1">Cytoplasm</location>
    </subcellularLocation>
</comment>
<comment type="domain">
    <text evidence="1">The PRC barrel domain binds ribosomal protein uS19.</text>
</comment>
<comment type="similarity">
    <text evidence="1">Belongs to the RimM family.</text>
</comment>
<evidence type="ECO:0000255" key="1">
    <source>
        <dbReference type="HAMAP-Rule" id="MF_00014"/>
    </source>
</evidence>
<proteinExistence type="inferred from homology"/>
<name>RIMM_STRP3</name>
<dbReference type="EMBL" id="AE014074">
    <property type="protein sequence ID" value="AAM79180.1"/>
    <property type="molecule type" value="Genomic_DNA"/>
</dbReference>
<dbReference type="RefSeq" id="WP_002994772.1">
    <property type="nucleotide sequence ID" value="NC_004070.1"/>
</dbReference>
<dbReference type="SMR" id="P0DF04"/>
<dbReference type="GeneID" id="69901042"/>
<dbReference type="KEGG" id="spg:SpyM3_0573"/>
<dbReference type="HOGENOM" id="CLU_077636_3_1_9"/>
<dbReference type="Proteomes" id="UP000000564">
    <property type="component" value="Chromosome"/>
</dbReference>
<dbReference type="GO" id="GO:0005737">
    <property type="term" value="C:cytoplasm"/>
    <property type="evidence" value="ECO:0007669"/>
    <property type="project" value="UniProtKB-SubCell"/>
</dbReference>
<dbReference type="GO" id="GO:0005840">
    <property type="term" value="C:ribosome"/>
    <property type="evidence" value="ECO:0007669"/>
    <property type="project" value="InterPro"/>
</dbReference>
<dbReference type="GO" id="GO:0043022">
    <property type="term" value="F:ribosome binding"/>
    <property type="evidence" value="ECO:0007669"/>
    <property type="project" value="InterPro"/>
</dbReference>
<dbReference type="GO" id="GO:0042274">
    <property type="term" value="P:ribosomal small subunit biogenesis"/>
    <property type="evidence" value="ECO:0007669"/>
    <property type="project" value="UniProtKB-UniRule"/>
</dbReference>
<dbReference type="GO" id="GO:0006364">
    <property type="term" value="P:rRNA processing"/>
    <property type="evidence" value="ECO:0007669"/>
    <property type="project" value="UniProtKB-UniRule"/>
</dbReference>
<dbReference type="Gene3D" id="2.30.30.240">
    <property type="entry name" value="PRC-barrel domain"/>
    <property type="match status" value="1"/>
</dbReference>
<dbReference type="Gene3D" id="2.40.30.60">
    <property type="entry name" value="RimM"/>
    <property type="match status" value="1"/>
</dbReference>
<dbReference type="HAMAP" id="MF_00014">
    <property type="entry name" value="Ribosome_mat_RimM"/>
    <property type="match status" value="1"/>
</dbReference>
<dbReference type="InterPro" id="IPR027275">
    <property type="entry name" value="PRC-brl_dom"/>
</dbReference>
<dbReference type="InterPro" id="IPR011033">
    <property type="entry name" value="PRC_barrel-like_sf"/>
</dbReference>
<dbReference type="InterPro" id="IPR011961">
    <property type="entry name" value="RimM"/>
</dbReference>
<dbReference type="InterPro" id="IPR002676">
    <property type="entry name" value="RimM_N"/>
</dbReference>
<dbReference type="InterPro" id="IPR036976">
    <property type="entry name" value="RimM_N_sf"/>
</dbReference>
<dbReference type="InterPro" id="IPR009000">
    <property type="entry name" value="Transl_B-barrel_sf"/>
</dbReference>
<dbReference type="NCBIfam" id="TIGR02273">
    <property type="entry name" value="16S_RimM"/>
    <property type="match status" value="1"/>
</dbReference>
<dbReference type="PANTHER" id="PTHR33692">
    <property type="entry name" value="RIBOSOME MATURATION FACTOR RIMM"/>
    <property type="match status" value="1"/>
</dbReference>
<dbReference type="PANTHER" id="PTHR33692:SF1">
    <property type="entry name" value="RIBOSOME MATURATION FACTOR RIMM"/>
    <property type="match status" value="1"/>
</dbReference>
<dbReference type="Pfam" id="PF05239">
    <property type="entry name" value="PRC"/>
    <property type="match status" value="1"/>
</dbReference>
<dbReference type="Pfam" id="PF01782">
    <property type="entry name" value="RimM"/>
    <property type="match status" value="1"/>
</dbReference>
<dbReference type="SUPFAM" id="SSF50346">
    <property type="entry name" value="PRC-barrel domain"/>
    <property type="match status" value="1"/>
</dbReference>
<dbReference type="SUPFAM" id="SSF50447">
    <property type="entry name" value="Translation proteins"/>
    <property type="match status" value="1"/>
</dbReference>
<sequence length="172" mass="20026">MEYFNVGKIVNTQGLQGEMRVLSVSDFAEERFKKGSQLALFDDKDRFVQEVTIVSHRKQKHFDIIKLKDMYHINAIEKYKGYTLKVSKDNQGDLQEGEFYYHQIIGMAVYEKDRLIGYVKEILQPGANDVWVVKRQGKRDLLLPYIPPVVLNVDVPNKRVDVELMEGLDDED</sequence>
<accession>P0DF04</accession>
<accession>Q8K7X4</accession>
<keyword id="KW-0143">Chaperone</keyword>
<keyword id="KW-0963">Cytoplasm</keyword>
<keyword id="KW-0690">Ribosome biogenesis</keyword>
<keyword id="KW-0698">rRNA processing</keyword>
<organism>
    <name type="scientific">Streptococcus pyogenes serotype M3 (strain ATCC BAA-595 / MGAS315)</name>
    <dbReference type="NCBI Taxonomy" id="198466"/>
    <lineage>
        <taxon>Bacteria</taxon>
        <taxon>Bacillati</taxon>
        <taxon>Bacillota</taxon>
        <taxon>Bacilli</taxon>
        <taxon>Lactobacillales</taxon>
        <taxon>Streptococcaceae</taxon>
        <taxon>Streptococcus</taxon>
    </lineage>
</organism>